<proteinExistence type="inferred from homology"/>
<feature type="chain" id="PRO_1000074455" description="UDP-N-acetylglucosamine--N-acetylmuramyl-(pentapeptide) pyrophosphoryl-undecaprenol N-acetylglucosamine transferase">
    <location>
        <begin position="1"/>
        <end position="358"/>
    </location>
</feature>
<feature type="binding site" evidence="1">
    <location>
        <begin position="11"/>
        <end position="13"/>
    </location>
    <ligand>
        <name>UDP-N-acetyl-alpha-D-glucosamine</name>
        <dbReference type="ChEBI" id="CHEBI:57705"/>
    </ligand>
</feature>
<feature type="binding site" evidence="1">
    <location>
        <position position="122"/>
    </location>
    <ligand>
        <name>UDP-N-acetyl-alpha-D-glucosamine</name>
        <dbReference type="ChEBI" id="CHEBI:57705"/>
    </ligand>
</feature>
<feature type="binding site" evidence="1">
    <location>
        <position position="161"/>
    </location>
    <ligand>
        <name>UDP-N-acetyl-alpha-D-glucosamine</name>
        <dbReference type="ChEBI" id="CHEBI:57705"/>
    </ligand>
</feature>
<feature type="binding site" evidence="1">
    <location>
        <position position="189"/>
    </location>
    <ligand>
        <name>UDP-N-acetyl-alpha-D-glucosamine</name>
        <dbReference type="ChEBI" id="CHEBI:57705"/>
    </ligand>
</feature>
<feature type="binding site" evidence="1">
    <location>
        <position position="243"/>
    </location>
    <ligand>
        <name>UDP-N-acetyl-alpha-D-glucosamine</name>
        <dbReference type="ChEBI" id="CHEBI:57705"/>
    </ligand>
</feature>
<feature type="binding site" evidence="1">
    <location>
        <begin position="262"/>
        <end position="267"/>
    </location>
    <ligand>
        <name>UDP-N-acetyl-alpha-D-glucosamine</name>
        <dbReference type="ChEBI" id="CHEBI:57705"/>
    </ligand>
</feature>
<feature type="binding site" evidence="1">
    <location>
        <position position="288"/>
    </location>
    <ligand>
        <name>UDP-N-acetyl-alpha-D-glucosamine</name>
        <dbReference type="ChEBI" id="CHEBI:57705"/>
    </ligand>
</feature>
<organism>
    <name type="scientific">Coxiella burnetii (strain RSA 331 / Henzerling II)</name>
    <dbReference type="NCBI Taxonomy" id="360115"/>
    <lineage>
        <taxon>Bacteria</taxon>
        <taxon>Pseudomonadati</taxon>
        <taxon>Pseudomonadota</taxon>
        <taxon>Gammaproteobacteria</taxon>
        <taxon>Legionellales</taxon>
        <taxon>Coxiellaceae</taxon>
        <taxon>Coxiella</taxon>
    </lineage>
</organism>
<gene>
    <name evidence="1" type="primary">murG</name>
    <name type="ordered locus">COXBURSA331_A0224</name>
</gene>
<accession>A9NA44</accession>
<name>MURG_COXBR</name>
<dbReference type="EC" id="2.4.1.227" evidence="1"/>
<dbReference type="EMBL" id="CP000890">
    <property type="protein sequence ID" value="ABX77734.1"/>
    <property type="molecule type" value="Genomic_DNA"/>
</dbReference>
<dbReference type="RefSeq" id="WP_005769484.1">
    <property type="nucleotide sequence ID" value="NC_010117.1"/>
</dbReference>
<dbReference type="SMR" id="A9NA44"/>
<dbReference type="CAZy" id="GT28">
    <property type="family name" value="Glycosyltransferase Family 28"/>
</dbReference>
<dbReference type="KEGG" id="cbs:COXBURSA331_A0224"/>
<dbReference type="HOGENOM" id="CLU_037404_2_0_6"/>
<dbReference type="UniPathway" id="UPA00219"/>
<dbReference type="GO" id="GO:0005886">
    <property type="term" value="C:plasma membrane"/>
    <property type="evidence" value="ECO:0007669"/>
    <property type="project" value="UniProtKB-SubCell"/>
</dbReference>
<dbReference type="GO" id="GO:0051991">
    <property type="term" value="F:UDP-N-acetyl-D-glucosamine:N-acetylmuramoyl-L-alanyl-D-glutamyl-meso-2,6-diaminopimelyl-D-alanyl-D-alanine-diphosphoundecaprenol 4-beta-N-acetylglucosaminlytransferase activity"/>
    <property type="evidence" value="ECO:0007669"/>
    <property type="project" value="RHEA"/>
</dbReference>
<dbReference type="GO" id="GO:0050511">
    <property type="term" value="F:undecaprenyldiphospho-muramoylpentapeptide beta-N-acetylglucosaminyltransferase activity"/>
    <property type="evidence" value="ECO:0007669"/>
    <property type="project" value="UniProtKB-UniRule"/>
</dbReference>
<dbReference type="GO" id="GO:0005975">
    <property type="term" value="P:carbohydrate metabolic process"/>
    <property type="evidence" value="ECO:0007669"/>
    <property type="project" value="InterPro"/>
</dbReference>
<dbReference type="GO" id="GO:0051301">
    <property type="term" value="P:cell division"/>
    <property type="evidence" value="ECO:0007669"/>
    <property type="project" value="UniProtKB-KW"/>
</dbReference>
<dbReference type="GO" id="GO:0071555">
    <property type="term" value="P:cell wall organization"/>
    <property type="evidence" value="ECO:0007669"/>
    <property type="project" value="UniProtKB-KW"/>
</dbReference>
<dbReference type="GO" id="GO:0030259">
    <property type="term" value="P:lipid glycosylation"/>
    <property type="evidence" value="ECO:0007669"/>
    <property type="project" value="UniProtKB-UniRule"/>
</dbReference>
<dbReference type="GO" id="GO:0009252">
    <property type="term" value="P:peptidoglycan biosynthetic process"/>
    <property type="evidence" value="ECO:0007669"/>
    <property type="project" value="UniProtKB-UniRule"/>
</dbReference>
<dbReference type="GO" id="GO:0008360">
    <property type="term" value="P:regulation of cell shape"/>
    <property type="evidence" value="ECO:0007669"/>
    <property type="project" value="UniProtKB-KW"/>
</dbReference>
<dbReference type="CDD" id="cd03785">
    <property type="entry name" value="GT28_MurG"/>
    <property type="match status" value="1"/>
</dbReference>
<dbReference type="Gene3D" id="3.40.50.2000">
    <property type="entry name" value="Glycogen Phosphorylase B"/>
    <property type="match status" value="2"/>
</dbReference>
<dbReference type="HAMAP" id="MF_00033">
    <property type="entry name" value="MurG"/>
    <property type="match status" value="1"/>
</dbReference>
<dbReference type="InterPro" id="IPR006009">
    <property type="entry name" value="GlcNAc_MurG"/>
</dbReference>
<dbReference type="InterPro" id="IPR007235">
    <property type="entry name" value="Glyco_trans_28_C"/>
</dbReference>
<dbReference type="InterPro" id="IPR004276">
    <property type="entry name" value="GlycoTrans_28_N"/>
</dbReference>
<dbReference type="NCBIfam" id="TIGR01133">
    <property type="entry name" value="murG"/>
    <property type="match status" value="1"/>
</dbReference>
<dbReference type="PANTHER" id="PTHR21015:SF22">
    <property type="entry name" value="GLYCOSYLTRANSFERASE"/>
    <property type="match status" value="1"/>
</dbReference>
<dbReference type="PANTHER" id="PTHR21015">
    <property type="entry name" value="UDP-N-ACETYLGLUCOSAMINE--N-ACETYLMURAMYL-(PENTAPEPTIDE) PYROPHOSPHORYL-UNDECAPRENOL N-ACETYLGLUCOSAMINE TRANSFERASE 1"/>
    <property type="match status" value="1"/>
</dbReference>
<dbReference type="Pfam" id="PF04101">
    <property type="entry name" value="Glyco_tran_28_C"/>
    <property type="match status" value="1"/>
</dbReference>
<dbReference type="Pfam" id="PF03033">
    <property type="entry name" value="Glyco_transf_28"/>
    <property type="match status" value="1"/>
</dbReference>
<dbReference type="SUPFAM" id="SSF53756">
    <property type="entry name" value="UDP-Glycosyltransferase/glycogen phosphorylase"/>
    <property type="match status" value="1"/>
</dbReference>
<keyword id="KW-0131">Cell cycle</keyword>
<keyword id="KW-0132">Cell division</keyword>
<keyword id="KW-0997">Cell inner membrane</keyword>
<keyword id="KW-1003">Cell membrane</keyword>
<keyword id="KW-0133">Cell shape</keyword>
<keyword id="KW-0961">Cell wall biogenesis/degradation</keyword>
<keyword id="KW-0328">Glycosyltransferase</keyword>
<keyword id="KW-0472">Membrane</keyword>
<keyword id="KW-0573">Peptidoglycan synthesis</keyword>
<keyword id="KW-0808">Transferase</keyword>
<protein>
    <recommendedName>
        <fullName evidence="1">UDP-N-acetylglucosamine--N-acetylmuramyl-(pentapeptide) pyrophosphoryl-undecaprenol N-acetylglucosamine transferase</fullName>
        <ecNumber evidence="1">2.4.1.227</ecNumber>
    </recommendedName>
    <alternativeName>
        <fullName evidence="1">Undecaprenyl-PP-MurNAc-pentapeptide-UDPGlcNAc GlcNAc transferase</fullName>
    </alternativeName>
</protein>
<evidence type="ECO:0000255" key="1">
    <source>
        <dbReference type="HAMAP-Rule" id="MF_00033"/>
    </source>
</evidence>
<comment type="function">
    <text evidence="1">Cell wall formation. Catalyzes the transfer of a GlcNAc subunit on undecaprenyl-pyrophosphoryl-MurNAc-pentapeptide (lipid intermediate I) to form undecaprenyl-pyrophosphoryl-MurNAc-(pentapeptide)GlcNAc (lipid intermediate II).</text>
</comment>
<comment type="catalytic activity">
    <reaction evidence="1">
        <text>di-trans,octa-cis-undecaprenyl diphospho-N-acetyl-alpha-D-muramoyl-L-alanyl-D-glutamyl-meso-2,6-diaminopimeloyl-D-alanyl-D-alanine + UDP-N-acetyl-alpha-D-glucosamine = di-trans,octa-cis-undecaprenyl diphospho-[N-acetyl-alpha-D-glucosaminyl-(1-&gt;4)]-N-acetyl-alpha-D-muramoyl-L-alanyl-D-glutamyl-meso-2,6-diaminopimeloyl-D-alanyl-D-alanine + UDP + H(+)</text>
        <dbReference type="Rhea" id="RHEA:31227"/>
        <dbReference type="ChEBI" id="CHEBI:15378"/>
        <dbReference type="ChEBI" id="CHEBI:57705"/>
        <dbReference type="ChEBI" id="CHEBI:58223"/>
        <dbReference type="ChEBI" id="CHEBI:61387"/>
        <dbReference type="ChEBI" id="CHEBI:61388"/>
        <dbReference type="EC" id="2.4.1.227"/>
    </reaction>
</comment>
<comment type="pathway">
    <text evidence="1">Cell wall biogenesis; peptidoglycan biosynthesis.</text>
</comment>
<comment type="subcellular location">
    <subcellularLocation>
        <location evidence="1">Cell inner membrane</location>
        <topology evidence="1">Peripheral membrane protein</topology>
        <orientation evidence="1">Cytoplasmic side</orientation>
    </subcellularLocation>
</comment>
<comment type="similarity">
    <text evidence="1">Belongs to the glycosyltransferase 28 family. MurG subfamily.</text>
</comment>
<sequence>MNRILIIAGGTGGHIFPALAVARELREQEVDVQWLGVKGGLEEKLVPDSFPLHLIQIKAFRGKRGLQQLLMPLRLVRAVFQAYRIIRQFKPDVILGMGGYVAGPGGLAAWITRTPLIIHEQNSIPGLTNRVLAKMAKFILQGFPDTFPQNRKVITTGNPVRTELVKMPLPQVRLAARRGPLRILVLGGSQGARSINQKMLAALSSYPRSEEIAVWHQTGQRDFEFIQKEYEKIKIEAKVDNFISDMAGAYGWADLVVCRAGALTVCEIASVGVASIFIPYPHAVDNHQFHNARFLEQAGAAIIISEESLTETDLMRWFEQFAQDRDRLLTMAENARKLAKPEAVQRVIAQCKKFYAAR</sequence>
<reference key="1">
    <citation type="submission" date="2007-11" db="EMBL/GenBank/DDBJ databases">
        <title>Genome sequencing of phylogenetically and phenotypically diverse Coxiella burnetii isolates.</title>
        <authorList>
            <person name="Seshadri R."/>
            <person name="Samuel J.E."/>
        </authorList>
    </citation>
    <scope>NUCLEOTIDE SEQUENCE [LARGE SCALE GENOMIC DNA]</scope>
    <source>
        <strain>RSA 331 / Henzerling II</strain>
    </source>
</reference>